<dbReference type="EMBL" id="CP000758">
    <property type="protein sequence ID" value="ABS14921.1"/>
    <property type="molecule type" value="Genomic_DNA"/>
</dbReference>
<dbReference type="RefSeq" id="WP_010660143.1">
    <property type="nucleotide sequence ID" value="NC_009667.1"/>
</dbReference>
<dbReference type="SMR" id="A6X117"/>
<dbReference type="STRING" id="439375.Oant_2205"/>
<dbReference type="GeneID" id="61317343"/>
<dbReference type="KEGG" id="oan:Oant_2205"/>
<dbReference type="eggNOG" id="COG1219">
    <property type="taxonomic scope" value="Bacteria"/>
</dbReference>
<dbReference type="HOGENOM" id="CLU_014218_8_2_5"/>
<dbReference type="PhylomeDB" id="A6X117"/>
<dbReference type="Proteomes" id="UP000002301">
    <property type="component" value="Chromosome 1"/>
</dbReference>
<dbReference type="GO" id="GO:0009376">
    <property type="term" value="C:HslUV protease complex"/>
    <property type="evidence" value="ECO:0007669"/>
    <property type="project" value="TreeGrafter"/>
</dbReference>
<dbReference type="GO" id="GO:0005524">
    <property type="term" value="F:ATP binding"/>
    <property type="evidence" value="ECO:0007669"/>
    <property type="project" value="UniProtKB-UniRule"/>
</dbReference>
<dbReference type="GO" id="GO:0016887">
    <property type="term" value="F:ATP hydrolysis activity"/>
    <property type="evidence" value="ECO:0007669"/>
    <property type="project" value="InterPro"/>
</dbReference>
<dbReference type="GO" id="GO:0140662">
    <property type="term" value="F:ATP-dependent protein folding chaperone"/>
    <property type="evidence" value="ECO:0007669"/>
    <property type="project" value="InterPro"/>
</dbReference>
<dbReference type="GO" id="GO:0046983">
    <property type="term" value="F:protein dimerization activity"/>
    <property type="evidence" value="ECO:0007669"/>
    <property type="project" value="InterPro"/>
</dbReference>
<dbReference type="GO" id="GO:0051082">
    <property type="term" value="F:unfolded protein binding"/>
    <property type="evidence" value="ECO:0007669"/>
    <property type="project" value="UniProtKB-UniRule"/>
</dbReference>
<dbReference type="GO" id="GO:0008270">
    <property type="term" value="F:zinc ion binding"/>
    <property type="evidence" value="ECO:0007669"/>
    <property type="project" value="InterPro"/>
</dbReference>
<dbReference type="GO" id="GO:0051301">
    <property type="term" value="P:cell division"/>
    <property type="evidence" value="ECO:0007669"/>
    <property type="project" value="TreeGrafter"/>
</dbReference>
<dbReference type="GO" id="GO:0051603">
    <property type="term" value="P:proteolysis involved in protein catabolic process"/>
    <property type="evidence" value="ECO:0007669"/>
    <property type="project" value="TreeGrafter"/>
</dbReference>
<dbReference type="CDD" id="cd19497">
    <property type="entry name" value="RecA-like_ClpX"/>
    <property type="match status" value="1"/>
</dbReference>
<dbReference type="FunFam" id="1.10.8.60:FF:000002">
    <property type="entry name" value="ATP-dependent Clp protease ATP-binding subunit ClpX"/>
    <property type="match status" value="1"/>
</dbReference>
<dbReference type="FunFam" id="3.40.50.300:FF:000005">
    <property type="entry name" value="ATP-dependent Clp protease ATP-binding subunit ClpX"/>
    <property type="match status" value="1"/>
</dbReference>
<dbReference type="Gene3D" id="1.10.8.60">
    <property type="match status" value="1"/>
</dbReference>
<dbReference type="Gene3D" id="6.20.220.10">
    <property type="entry name" value="ClpX chaperone, C4-type zinc finger domain"/>
    <property type="match status" value="1"/>
</dbReference>
<dbReference type="Gene3D" id="3.40.50.300">
    <property type="entry name" value="P-loop containing nucleotide triphosphate hydrolases"/>
    <property type="match status" value="1"/>
</dbReference>
<dbReference type="HAMAP" id="MF_00175">
    <property type="entry name" value="ClpX"/>
    <property type="match status" value="1"/>
</dbReference>
<dbReference type="InterPro" id="IPR003593">
    <property type="entry name" value="AAA+_ATPase"/>
</dbReference>
<dbReference type="InterPro" id="IPR050052">
    <property type="entry name" value="ATP-dep_Clp_protease_ClpX"/>
</dbReference>
<dbReference type="InterPro" id="IPR003959">
    <property type="entry name" value="ATPase_AAA_core"/>
</dbReference>
<dbReference type="InterPro" id="IPR019489">
    <property type="entry name" value="Clp_ATPase_C"/>
</dbReference>
<dbReference type="InterPro" id="IPR004487">
    <property type="entry name" value="Clp_protease_ATP-bd_su_ClpX"/>
</dbReference>
<dbReference type="InterPro" id="IPR046425">
    <property type="entry name" value="ClpX_bact"/>
</dbReference>
<dbReference type="InterPro" id="IPR027417">
    <property type="entry name" value="P-loop_NTPase"/>
</dbReference>
<dbReference type="InterPro" id="IPR010603">
    <property type="entry name" value="Znf_CppX_C4"/>
</dbReference>
<dbReference type="InterPro" id="IPR038366">
    <property type="entry name" value="Znf_CppX_C4_sf"/>
</dbReference>
<dbReference type="NCBIfam" id="TIGR00382">
    <property type="entry name" value="clpX"/>
    <property type="match status" value="1"/>
</dbReference>
<dbReference type="NCBIfam" id="NF003745">
    <property type="entry name" value="PRK05342.1"/>
    <property type="match status" value="1"/>
</dbReference>
<dbReference type="PANTHER" id="PTHR48102:SF7">
    <property type="entry name" value="ATP-DEPENDENT CLP PROTEASE ATP-BINDING SUBUNIT CLPX-LIKE, MITOCHONDRIAL"/>
    <property type="match status" value="1"/>
</dbReference>
<dbReference type="PANTHER" id="PTHR48102">
    <property type="entry name" value="ATP-DEPENDENT CLP PROTEASE ATP-BINDING SUBUNIT CLPX-LIKE, MITOCHONDRIAL-RELATED"/>
    <property type="match status" value="1"/>
</dbReference>
<dbReference type="Pfam" id="PF07724">
    <property type="entry name" value="AAA_2"/>
    <property type="match status" value="1"/>
</dbReference>
<dbReference type="Pfam" id="PF10431">
    <property type="entry name" value="ClpB_D2-small"/>
    <property type="match status" value="1"/>
</dbReference>
<dbReference type="Pfam" id="PF06689">
    <property type="entry name" value="zf-C4_ClpX"/>
    <property type="match status" value="1"/>
</dbReference>
<dbReference type="SMART" id="SM00382">
    <property type="entry name" value="AAA"/>
    <property type="match status" value="1"/>
</dbReference>
<dbReference type="SMART" id="SM01086">
    <property type="entry name" value="ClpB_D2-small"/>
    <property type="match status" value="1"/>
</dbReference>
<dbReference type="SMART" id="SM00994">
    <property type="entry name" value="zf-C4_ClpX"/>
    <property type="match status" value="1"/>
</dbReference>
<dbReference type="SUPFAM" id="SSF57716">
    <property type="entry name" value="Glucocorticoid receptor-like (DNA-binding domain)"/>
    <property type="match status" value="1"/>
</dbReference>
<dbReference type="SUPFAM" id="SSF52540">
    <property type="entry name" value="P-loop containing nucleoside triphosphate hydrolases"/>
    <property type="match status" value="1"/>
</dbReference>
<dbReference type="PROSITE" id="PS51902">
    <property type="entry name" value="CLPX_ZB"/>
    <property type="match status" value="1"/>
</dbReference>
<protein>
    <recommendedName>
        <fullName evidence="1">ATP-dependent Clp protease ATP-binding subunit ClpX</fullName>
    </recommendedName>
</protein>
<organism>
    <name type="scientific">Brucella anthropi (strain ATCC 49188 / DSM 6882 / CCUG 24695 / JCM 21032 / LMG 3331 / NBRC 15819 / NCTC 12168 / Alc 37)</name>
    <name type="common">Ochrobactrum anthropi</name>
    <dbReference type="NCBI Taxonomy" id="439375"/>
    <lineage>
        <taxon>Bacteria</taxon>
        <taxon>Pseudomonadati</taxon>
        <taxon>Pseudomonadota</taxon>
        <taxon>Alphaproteobacteria</taxon>
        <taxon>Hyphomicrobiales</taxon>
        <taxon>Brucellaceae</taxon>
        <taxon>Brucella/Ochrobactrum group</taxon>
        <taxon>Brucella</taxon>
    </lineage>
</organism>
<evidence type="ECO:0000255" key="1">
    <source>
        <dbReference type="HAMAP-Rule" id="MF_00175"/>
    </source>
</evidence>
<evidence type="ECO:0000255" key="2">
    <source>
        <dbReference type="PROSITE-ProRule" id="PRU01250"/>
    </source>
</evidence>
<feature type="chain" id="PRO_1000024603" description="ATP-dependent Clp protease ATP-binding subunit ClpX">
    <location>
        <begin position="1"/>
        <end position="424"/>
    </location>
</feature>
<feature type="domain" description="ClpX-type ZB" evidence="2">
    <location>
        <begin position="5"/>
        <end position="58"/>
    </location>
</feature>
<feature type="binding site" evidence="2">
    <location>
        <position position="17"/>
    </location>
    <ligand>
        <name>Zn(2+)</name>
        <dbReference type="ChEBI" id="CHEBI:29105"/>
    </ligand>
</feature>
<feature type="binding site" evidence="2">
    <location>
        <position position="20"/>
    </location>
    <ligand>
        <name>Zn(2+)</name>
        <dbReference type="ChEBI" id="CHEBI:29105"/>
    </ligand>
</feature>
<feature type="binding site" evidence="2">
    <location>
        <position position="39"/>
    </location>
    <ligand>
        <name>Zn(2+)</name>
        <dbReference type="ChEBI" id="CHEBI:29105"/>
    </ligand>
</feature>
<feature type="binding site" evidence="2">
    <location>
        <position position="42"/>
    </location>
    <ligand>
        <name>Zn(2+)</name>
        <dbReference type="ChEBI" id="CHEBI:29105"/>
    </ligand>
</feature>
<feature type="binding site" evidence="1">
    <location>
        <begin position="121"/>
        <end position="128"/>
    </location>
    <ligand>
        <name>ATP</name>
        <dbReference type="ChEBI" id="CHEBI:30616"/>
    </ligand>
</feature>
<proteinExistence type="inferred from homology"/>
<comment type="function">
    <text evidence="1">ATP-dependent specificity component of the Clp protease. It directs the protease to specific substrates. Can perform chaperone functions in the absence of ClpP.</text>
</comment>
<comment type="subunit">
    <text evidence="1">Component of the ClpX-ClpP complex. Forms a hexameric ring that, in the presence of ATP, binds to fourteen ClpP subunits assembled into a disk-like structure with a central cavity, resembling the structure of eukaryotic proteasomes.</text>
</comment>
<comment type="similarity">
    <text evidence="1">Belongs to the ClpX chaperone family.</text>
</comment>
<name>CLPX_BRUA4</name>
<keyword id="KW-0067">ATP-binding</keyword>
<keyword id="KW-0143">Chaperone</keyword>
<keyword id="KW-0479">Metal-binding</keyword>
<keyword id="KW-0547">Nucleotide-binding</keyword>
<keyword id="KW-1185">Reference proteome</keyword>
<keyword id="KW-0862">Zinc</keyword>
<accession>A6X117</accession>
<reference key="1">
    <citation type="journal article" date="2011" name="J. Bacteriol.">
        <title>Genome of Ochrobactrum anthropi ATCC 49188 T, a versatile opportunistic pathogen and symbiont of several eukaryotic hosts.</title>
        <authorList>
            <person name="Chain P.S."/>
            <person name="Lang D.M."/>
            <person name="Comerci D.J."/>
            <person name="Malfatti S.A."/>
            <person name="Vergez L.M."/>
            <person name="Shin M."/>
            <person name="Ugalde R.A."/>
            <person name="Garcia E."/>
            <person name="Tolmasky M.E."/>
        </authorList>
    </citation>
    <scope>NUCLEOTIDE SEQUENCE [LARGE SCALE GENOMIC DNA]</scope>
    <source>
        <strain>ATCC 49188 / DSM 6882 / CCUG 24695 / JCM 21032 / LMG 3331 / NBRC 15819 / NCTC 12168 / Alc 37</strain>
    </source>
</reference>
<sequence length="424" mass="46593">MSKVSNSGGDSKNTLYCSFCGKSQHEVRKLIAGPTVFICDECVELCMDIIREENKSSMVKSREGVPTPQEIMAVLDDYVIGQKDAKRVLSVAVHNHYKRLAHQSKSSDIELAKSNILLVGPTGCGKTYLAQTLARIIDVPFTMADATTLTEAGYVGEDVENIILKLLQAADYNVERAQRGIVYIDEVDKISRKSDNPSITRDVSGEGVQQALLKIMEGTVASVPPQGGRKHPQQEFLQVDTTNILFICGGAFAGLDKIISARGEKTSIGFGATVRSVDERRIGDVFRELEPEDLLKFGLIPEFVGRLPVIATLEDLDVDALVQILTEPKNALVKQYQRLFDMESVELSFHDDALRAIANKAVERKTGARGLRSIMEKILLDTMFELPTLEGVQEVVISGDVVDGSARPLYIYAERQDEKGNVSA</sequence>
<gene>
    <name evidence="1" type="primary">clpX</name>
    <name type="ordered locus">Oant_2205</name>
</gene>